<dbReference type="EC" id="3.5.2.7" evidence="1"/>
<dbReference type="EMBL" id="AE017355">
    <property type="protein sequence ID" value="AAT60511.1"/>
    <property type="molecule type" value="Genomic_DNA"/>
</dbReference>
<dbReference type="RefSeq" id="WP_000887529.1">
    <property type="nucleotide sequence ID" value="NC_005957.1"/>
</dbReference>
<dbReference type="RefSeq" id="YP_037725.1">
    <property type="nucleotide sequence ID" value="NC_005957.1"/>
</dbReference>
<dbReference type="SMR" id="Q6HFF1"/>
<dbReference type="GeneID" id="75086716"/>
<dbReference type="KEGG" id="btk:BT9727_3403"/>
<dbReference type="PATRIC" id="fig|281309.8.peg.3630"/>
<dbReference type="HOGENOM" id="CLU_041647_0_1_9"/>
<dbReference type="UniPathway" id="UPA00379">
    <property type="reaction ID" value="UER00551"/>
</dbReference>
<dbReference type="PRO" id="PR:Q6HFF1"/>
<dbReference type="Proteomes" id="UP000001301">
    <property type="component" value="Chromosome"/>
</dbReference>
<dbReference type="GO" id="GO:0005737">
    <property type="term" value="C:cytoplasm"/>
    <property type="evidence" value="ECO:0007669"/>
    <property type="project" value="UniProtKB-SubCell"/>
</dbReference>
<dbReference type="GO" id="GO:0050480">
    <property type="term" value="F:imidazolonepropionase activity"/>
    <property type="evidence" value="ECO:0007669"/>
    <property type="project" value="UniProtKB-UniRule"/>
</dbReference>
<dbReference type="GO" id="GO:0005506">
    <property type="term" value="F:iron ion binding"/>
    <property type="evidence" value="ECO:0007669"/>
    <property type="project" value="UniProtKB-UniRule"/>
</dbReference>
<dbReference type="GO" id="GO:0008270">
    <property type="term" value="F:zinc ion binding"/>
    <property type="evidence" value="ECO:0007669"/>
    <property type="project" value="UniProtKB-UniRule"/>
</dbReference>
<dbReference type="GO" id="GO:0019556">
    <property type="term" value="P:L-histidine catabolic process to glutamate and formamide"/>
    <property type="evidence" value="ECO:0007669"/>
    <property type="project" value="UniProtKB-UniPathway"/>
</dbReference>
<dbReference type="GO" id="GO:0019557">
    <property type="term" value="P:L-histidine catabolic process to glutamate and formate"/>
    <property type="evidence" value="ECO:0007669"/>
    <property type="project" value="UniProtKB-UniPathway"/>
</dbReference>
<dbReference type="CDD" id="cd01296">
    <property type="entry name" value="Imidazolone-5PH"/>
    <property type="match status" value="1"/>
</dbReference>
<dbReference type="FunFam" id="3.20.20.140:FF:000007">
    <property type="entry name" value="Imidazolonepropionase"/>
    <property type="match status" value="1"/>
</dbReference>
<dbReference type="Gene3D" id="3.20.20.140">
    <property type="entry name" value="Metal-dependent hydrolases"/>
    <property type="match status" value="1"/>
</dbReference>
<dbReference type="Gene3D" id="2.30.40.10">
    <property type="entry name" value="Urease, subunit C, domain 1"/>
    <property type="match status" value="1"/>
</dbReference>
<dbReference type="HAMAP" id="MF_00372">
    <property type="entry name" value="HutI"/>
    <property type="match status" value="1"/>
</dbReference>
<dbReference type="InterPro" id="IPR006680">
    <property type="entry name" value="Amidohydro-rel"/>
</dbReference>
<dbReference type="InterPro" id="IPR005920">
    <property type="entry name" value="HutI"/>
</dbReference>
<dbReference type="InterPro" id="IPR011059">
    <property type="entry name" value="Metal-dep_hydrolase_composite"/>
</dbReference>
<dbReference type="InterPro" id="IPR032466">
    <property type="entry name" value="Metal_Hydrolase"/>
</dbReference>
<dbReference type="NCBIfam" id="TIGR01224">
    <property type="entry name" value="hutI"/>
    <property type="match status" value="1"/>
</dbReference>
<dbReference type="PANTHER" id="PTHR42752">
    <property type="entry name" value="IMIDAZOLONEPROPIONASE"/>
    <property type="match status" value="1"/>
</dbReference>
<dbReference type="PANTHER" id="PTHR42752:SF1">
    <property type="entry name" value="IMIDAZOLONEPROPIONASE-RELATED"/>
    <property type="match status" value="1"/>
</dbReference>
<dbReference type="Pfam" id="PF01979">
    <property type="entry name" value="Amidohydro_1"/>
    <property type="match status" value="1"/>
</dbReference>
<dbReference type="SUPFAM" id="SSF51338">
    <property type="entry name" value="Composite domain of metallo-dependent hydrolases"/>
    <property type="match status" value="1"/>
</dbReference>
<dbReference type="SUPFAM" id="SSF51556">
    <property type="entry name" value="Metallo-dependent hydrolases"/>
    <property type="match status" value="1"/>
</dbReference>
<comment type="function">
    <text evidence="1">Catalyzes the hydrolytic cleavage of the carbon-nitrogen bond in imidazolone-5-propanoate to yield N-formimidoyl-L-glutamate. It is the third step in the universal histidine degradation pathway.</text>
</comment>
<comment type="catalytic activity">
    <reaction evidence="1">
        <text>4-imidazolone-5-propanoate + H2O = N-formimidoyl-L-glutamate</text>
        <dbReference type="Rhea" id="RHEA:23660"/>
        <dbReference type="ChEBI" id="CHEBI:15377"/>
        <dbReference type="ChEBI" id="CHEBI:58928"/>
        <dbReference type="ChEBI" id="CHEBI:77893"/>
        <dbReference type="EC" id="3.5.2.7"/>
    </reaction>
</comment>
<comment type="cofactor">
    <cofactor evidence="1">
        <name>Zn(2+)</name>
        <dbReference type="ChEBI" id="CHEBI:29105"/>
    </cofactor>
    <cofactor evidence="1">
        <name>Fe(3+)</name>
        <dbReference type="ChEBI" id="CHEBI:29034"/>
    </cofactor>
    <text evidence="1">Binds 1 zinc or iron ion per subunit.</text>
</comment>
<comment type="pathway">
    <text evidence="1">Amino-acid degradation; L-histidine degradation into L-glutamate; N-formimidoyl-L-glutamate from L-histidine: step 3/3.</text>
</comment>
<comment type="subcellular location">
    <subcellularLocation>
        <location evidence="1">Cytoplasm</location>
    </subcellularLocation>
</comment>
<comment type="similarity">
    <text evidence="1">Belongs to the metallo-dependent hydrolases superfamily. HutI family.</text>
</comment>
<reference key="1">
    <citation type="journal article" date="2006" name="J. Bacteriol.">
        <title>Pathogenomic sequence analysis of Bacillus cereus and Bacillus thuringiensis isolates closely related to Bacillus anthracis.</title>
        <authorList>
            <person name="Han C.S."/>
            <person name="Xie G."/>
            <person name="Challacombe J.F."/>
            <person name="Altherr M.R."/>
            <person name="Bhotika S.S."/>
            <person name="Bruce D."/>
            <person name="Campbell C.S."/>
            <person name="Campbell M.L."/>
            <person name="Chen J."/>
            <person name="Chertkov O."/>
            <person name="Cleland C."/>
            <person name="Dimitrijevic M."/>
            <person name="Doggett N.A."/>
            <person name="Fawcett J.J."/>
            <person name="Glavina T."/>
            <person name="Goodwin L.A."/>
            <person name="Hill K.K."/>
            <person name="Hitchcock P."/>
            <person name="Jackson P.J."/>
            <person name="Keim P."/>
            <person name="Kewalramani A.R."/>
            <person name="Longmire J."/>
            <person name="Lucas S."/>
            <person name="Malfatti S."/>
            <person name="McMurry K."/>
            <person name="Meincke L.J."/>
            <person name="Misra M."/>
            <person name="Moseman B.L."/>
            <person name="Mundt M."/>
            <person name="Munk A.C."/>
            <person name="Okinaka R.T."/>
            <person name="Parson-Quintana B."/>
            <person name="Reilly L.P."/>
            <person name="Richardson P."/>
            <person name="Robinson D.L."/>
            <person name="Rubin E."/>
            <person name="Saunders E."/>
            <person name="Tapia R."/>
            <person name="Tesmer J.G."/>
            <person name="Thayer N."/>
            <person name="Thompson L.S."/>
            <person name="Tice H."/>
            <person name="Ticknor L.O."/>
            <person name="Wills P.L."/>
            <person name="Brettin T.S."/>
            <person name="Gilna P."/>
        </authorList>
    </citation>
    <scope>NUCLEOTIDE SEQUENCE [LARGE SCALE GENOMIC DNA]</scope>
    <source>
        <strain>97-27</strain>
    </source>
</reference>
<proteinExistence type="inferred from homology"/>
<keyword id="KW-0963">Cytoplasm</keyword>
<keyword id="KW-0369">Histidine metabolism</keyword>
<keyword id="KW-0378">Hydrolase</keyword>
<keyword id="KW-0408">Iron</keyword>
<keyword id="KW-0479">Metal-binding</keyword>
<keyword id="KW-0862">Zinc</keyword>
<feature type="chain" id="PRO_0000306434" description="Imidazolonepropionase">
    <location>
        <begin position="1"/>
        <end position="423"/>
    </location>
</feature>
<feature type="binding site" evidence="1">
    <location>
        <position position="78"/>
    </location>
    <ligand>
        <name>Fe(3+)</name>
        <dbReference type="ChEBI" id="CHEBI:29034"/>
    </ligand>
</feature>
<feature type="binding site" evidence="1">
    <location>
        <position position="78"/>
    </location>
    <ligand>
        <name>Zn(2+)</name>
        <dbReference type="ChEBI" id="CHEBI:29105"/>
    </ligand>
</feature>
<feature type="binding site" evidence="1">
    <location>
        <position position="80"/>
    </location>
    <ligand>
        <name>Fe(3+)</name>
        <dbReference type="ChEBI" id="CHEBI:29034"/>
    </ligand>
</feature>
<feature type="binding site" evidence="1">
    <location>
        <position position="80"/>
    </location>
    <ligand>
        <name>Zn(2+)</name>
        <dbReference type="ChEBI" id="CHEBI:29105"/>
    </ligand>
</feature>
<feature type="binding site" evidence="1">
    <location>
        <position position="87"/>
    </location>
    <ligand>
        <name>4-imidazolone-5-propanoate</name>
        <dbReference type="ChEBI" id="CHEBI:77893"/>
    </ligand>
</feature>
<feature type="binding site" evidence="1">
    <location>
        <position position="150"/>
    </location>
    <ligand>
        <name>4-imidazolone-5-propanoate</name>
        <dbReference type="ChEBI" id="CHEBI:77893"/>
    </ligand>
</feature>
<feature type="binding site" evidence="1">
    <location>
        <position position="150"/>
    </location>
    <ligand>
        <name>N-formimidoyl-L-glutamate</name>
        <dbReference type="ChEBI" id="CHEBI:58928"/>
    </ligand>
</feature>
<feature type="binding site" evidence="1">
    <location>
        <position position="183"/>
    </location>
    <ligand>
        <name>4-imidazolone-5-propanoate</name>
        <dbReference type="ChEBI" id="CHEBI:77893"/>
    </ligand>
</feature>
<feature type="binding site" evidence="1">
    <location>
        <position position="247"/>
    </location>
    <ligand>
        <name>Fe(3+)</name>
        <dbReference type="ChEBI" id="CHEBI:29034"/>
    </ligand>
</feature>
<feature type="binding site" evidence="1">
    <location>
        <position position="247"/>
    </location>
    <ligand>
        <name>Zn(2+)</name>
        <dbReference type="ChEBI" id="CHEBI:29105"/>
    </ligand>
</feature>
<feature type="binding site" evidence="1">
    <location>
        <position position="250"/>
    </location>
    <ligand>
        <name>4-imidazolone-5-propanoate</name>
        <dbReference type="ChEBI" id="CHEBI:77893"/>
    </ligand>
</feature>
<feature type="binding site" evidence="1">
    <location>
        <position position="322"/>
    </location>
    <ligand>
        <name>Fe(3+)</name>
        <dbReference type="ChEBI" id="CHEBI:29034"/>
    </ligand>
</feature>
<feature type="binding site" evidence="1">
    <location>
        <position position="322"/>
    </location>
    <ligand>
        <name>Zn(2+)</name>
        <dbReference type="ChEBI" id="CHEBI:29105"/>
    </ligand>
</feature>
<feature type="binding site" evidence="1">
    <location>
        <position position="324"/>
    </location>
    <ligand>
        <name>N-formimidoyl-L-glutamate</name>
        <dbReference type="ChEBI" id="CHEBI:58928"/>
    </ligand>
</feature>
<feature type="binding site" evidence="1">
    <location>
        <position position="326"/>
    </location>
    <ligand>
        <name>N-formimidoyl-L-glutamate</name>
        <dbReference type="ChEBI" id="CHEBI:58928"/>
    </ligand>
</feature>
<feature type="binding site" evidence="1">
    <location>
        <position position="327"/>
    </location>
    <ligand>
        <name>4-imidazolone-5-propanoate</name>
        <dbReference type="ChEBI" id="CHEBI:77893"/>
    </ligand>
</feature>
<protein>
    <recommendedName>
        <fullName evidence="1">Imidazolonepropionase</fullName>
        <ecNumber evidence="1">3.5.2.7</ecNumber>
    </recommendedName>
    <alternativeName>
        <fullName evidence="1">Imidazolone-5-propionate hydrolase</fullName>
    </alternativeName>
</protein>
<organism>
    <name type="scientific">Bacillus thuringiensis subsp. konkukian (strain 97-27)</name>
    <dbReference type="NCBI Taxonomy" id="281309"/>
    <lineage>
        <taxon>Bacteria</taxon>
        <taxon>Bacillati</taxon>
        <taxon>Bacillota</taxon>
        <taxon>Bacilli</taxon>
        <taxon>Bacillales</taxon>
        <taxon>Bacillaceae</taxon>
        <taxon>Bacillus</taxon>
        <taxon>Bacillus cereus group</taxon>
    </lineage>
</organism>
<name>HUTI_BACHK</name>
<sequence>MLDTLLINIGQLLTMDQEDGLLRREAMNTLPVIENGAVGIENGVITFVGTAEEAKGLQAKEVIDCGGKMVSPGLVDPHTHLVFGGSRENEIALKLQGVPYLEILEQGGGILSTVNATKQASKEELVQKAKFHLDRMLSFGVTTVEAKSGYGLDDETEWKQLEATAQLQKEHPIDLVSTFLGAHAVPKEYKGRSKEFLQWMLDLLPEMKEKQLAEFVDIFCETGVFSVEESKEFLLKAKELGFDVKIHADEIDPLGGAEAAAEIGAASADHLVGASDKGIEMLANSNTVATLLPGTTFYLNKESFARGRKMIDEGVAVALATDFNPGSCPTENIQLIMSIAMLKLKMTPEEVWNAVTVNSSYAINRGDVAGKIRVGRKADLVLWDAYNYAYVPYHYGVSHVNTVWKNGNIAYTRGEQSWSTATI</sequence>
<gene>
    <name evidence="1" type="primary">hutI</name>
    <name type="ordered locus">BT9727_3403</name>
</gene>
<evidence type="ECO:0000255" key="1">
    <source>
        <dbReference type="HAMAP-Rule" id="MF_00372"/>
    </source>
</evidence>
<accession>Q6HFF1</accession>